<proteinExistence type="evidence at transcript level"/>
<sequence length="65" mass="7408">MRLLLVFFFLSLLDQAPPARSGISRVRICREKGGHCDADCHLEERHLGGCRAAYLTFCCRKESPR</sequence>
<reference key="1">
    <citation type="journal article" date="2008" name="Genome Res.">
        <title>Defensins and the convergent evolution of platypus and reptile venom genes.</title>
        <authorList>
            <person name="Whittington C.M."/>
            <person name="Papenfuss A.T."/>
            <person name="Bansal P."/>
            <person name="Torres A.M."/>
            <person name="Wong E.S."/>
            <person name="Deakin J.E."/>
            <person name="Graves T."/>
            <person name="Alsop A."/>
            <person name="Schatzkamer K."/>
            <person name="Kremitzki C."/>
            <person name="Ponting C.P."/>
            <person name="Temple-Smith P."/>
            <person name="Warren W.C."/>
            <person name="Kuchel P.W."/>
            <person name="Belov K."/>
        </authorList>
    </citation>
    <scope>NUCLEOTIDE SEQUENCE [MRNA]</scope>
</reference>
<reference key="2">
    <citation type="journal article" date="2008" name="Toxicon">
        <title>Expression patterns of platypus defensin and related venom genes across a range of tissue types reveal the possibility of broader functions for OvDLPs than previously suspected.</title>
        <authorList>
            <person name="Whittington C.M."/>
            <person name="Papenfuss A.T."/>
            <person name="Kuchel P.W."/>
            <person name="Belov K."/>
        </authorList>
    </citation>
    <scope>TISSUE SPECIFICITY</scope>
</reference>
<organism>
    <name type="scientific">Ornithorhynchus anatinus</name>
    <name type="common">Duckbill platypus</name>
    <dbReference type="NCBI Taxonomy" id="9258"/>
    <lineage>
        <taxon>Eukaryota</taxon>
        <taxon>Metazoa</taxon>
        <taxon>Chordata</taxon>
        <taxon>Craniata</taxon>
        <taxon>Vertebrata</taxon>
        <taxon>Euteleostomi</taxon>
        <taxon>Mammalia</taxon>
        <taxon>Monotremata</taxon>
        <taxon>Ornithorhynchidae</taxon>
        <taxon>Ornithorhynchus</taxon>
    </lineage>
</organism>
<feature type="signal peptide" evidence="2">
    <location>
        <begin position="1"/>
        <end position="21"/>
    </location>
</feature>
<feature type="peptide" id="PRO_0000352722" description="Defensin-B3">
    <location>
        <begin position="22"/>
        <end position="59"/>
    </location>
</feature>
<feature type="propeptide" id="PRO_0000352723" evidence="2">
    <location>
        <begin position="62"/>
        <end position="65"/>
    </location>
</feature>
<feature type="disulfide bond" evidence="1">
    <location>
        <begin position="29"/>
        <end position="58"/>
    </location>
</feature>
<feature type="disulfide bond" evidence="1">
    <location>
        <begin position="36"/>
        <end position="50"/>
    </location>
</feature>
<feature type="disulfide bond" evidence="1">
    <location>
        <begin position="40"/>
        <end position="59"/>
    </location>
</feature>
<name>DEFB3_ORNAN</name>
<accession>P0C8A7</accession>
<comment type="function">
    <text evidence="1">Has antimicrobial activity.</text>
</comment>
<comment type="subcellular location">
    <subcellularLocation>
        <location evidence="1">Secreted</location>
    </subcellularLocation>
</comment>
<comment type="tissue specificity">
    <text evidence="3">Lowly expressed in spleen, and expressed at lower levels in kidney, lung and testis.</text>
</comment>
<comment type="similarity">
    <text evidence="6">Belongs to the beta-defensin family.</text>
</comment>
<comment type="online information" name="Platypus resources">
    <link uri="https://www.twinkl.ch/search?q=platypus"/>
</comment>
<keyword id="KW-0044">Antibiotic</keyword>
<keyword id="KW-0929">Antimicrobial</keyword>
<keyword id="KW-0165">Cleavage on pair of basic residues</keyword>
<keyword id="KW-0211">Defensin</keyword>
<keyword id="KW-1015">Disulfide bond</keyword>
<keyword id="KW-1185">Reference proteome</keyword>
<keyword id="KW-0964">Secreted</keyword>
<keyword id="KW-0732">Signal</keyword>
<evidence type="ECO:0000250" key="1"/>
<evidence type="ECO:0000255" key="2"/>
<evidence type="ECO:0000269" key="3">
    <source>
    </source>
</evidence>
<evidence type="ECO:0000303" key="4">
    <source>
    </source>
</evidence>
<evidence type="ECO:0000303" key="5">
    <source>
    </source>
</evidence>
<evidence type="ECO:0000305" key="6"/>
<evidence type="ECO:0000305" key="7">
    <source>
    </source>
</evidence>
<evidence type="ECO:0000305" key="8">
    <source>
    </source>
</evidence>
<protein>
    <recommendedName>
        <fullName evidence="7 8">Defensin-B3</fullName>
        <shortName evidence="4">DefB3</shortName>
        <shortName evidence="5">OaDefB3</shortName>
    </recommendedName>
</protein>
<dbReference type="SMR" id="P0C8A7"/>
<dbReference type="FunCoup" id="P0C8A7">
    <property type="interactions" value="1"/>
</dbReference>
<dbReference type="InParanoid" id="P0C8A7"/>
<dbReference type="Proteomes" id="UP000002279">
    <property type="component" value="Unplaced"/>
</dbReference>
<dbReference type="GO" id="GO:0005576">
    <property type="term" value="C:extracellular region"/>
    <property type="evidence" value="ECO:0007669"/>
    <property type="project" value="UniProtKB-SubCell"/>
</dbReference>
<dbReference type="GO" id="GO:0042742">
    <property type="term" value="P:defense response to bacterium"/>
    <property type="evidence" value="ECO:0007669"/>
    <property type="project" value="UniProtKB-KW"/>
</dbReference>
<dbReference type="GO" id="GO:0045087">
    <property type="term" value="P:innate immune response"/>
    <property type="evidence" value="ECO:0007669"/>
    <property type="project" value="InterPro"/>
</dbReference>
<dbReference type="InterPro" id="IPR025933">
    <property type="entry name" value="Beta_defensin_dom"/>
</dbReference>
<dbReference type="Pfam" id="PF13841">
    <property type="entry name" value="Defensin_beta_2"/>
    <property type="match status" value="1"/>
</dbReference>